<proteinExistence type="inferred from homology"/>
<comment type="function">
    <text evidence="1">Destroys superoxide anion radicals which are normally produced within the cells and which are toxic to biological systems.</text>
</comment>
<comment type="catalytic activity">
    <reaction>
        <text>2 superoxide + 2 H(+) = H2O2 + O2</text>
        <dbReference type="Rhea" id="RHEA:20696"/>
        <dbReference type="ChEBI" id="CHEBI:15378"/>
        <dbReference type="ChEBI" id="CHEBI:15379"/>
        <dbReference type="ChEBI" id="CHEBI:16240"/>
        <dbReference type="ChEBI" id="CHEBI:18421"/>
        <dbReference type="EC" id="1.15.1.1"/>
    </reaction>
</comment>
<comment type="cofactor">
    <cofactor evidence="1">
        <name>Fe cation</name>
        <dbReference type="ChEBI" id="CHEBI:24875"/>
    </cofactor>
    <text evidence="1">Binds 1 Fe cation per subunit.</text>
</comment>
<comment type="subunit">
    <text evidence="1">Homodimer.</text>
</comment>
<comment type="subcellular location">
    <subcellularLocation>
        <location evidence="2">Cytoplasm</location>
    </subcellularLocation>
</comment>
<comment type="similarity">
    <text evidence="2">Belongs to the iron/manganese superoxide dismutase family.</text>
</comment>
<organism>
    <name type="scientific">Plasmodium malariae</name>
    <dbReference type="NCBI Taxonomy" id="5858"/>
    <lineage>
        <taxon>Eukaryota</taxon>
        <taxon>Sar</taxon>
        <taxon>Alveolata</taxon>
        <taxon>Apicomplexa</taxon>
        <taxon>Aconoidasida</taxon>
        <taxon>Haemosporida</taxon>
        <taxon>Plasmodiidae</taxon>
        <taxon>Plasmodium</taxon>
        <taxon>Plasmodium (Plasmodium)</taxon>
    </lineage>
</organism>
<reference key="1">
    <citation type="journal article" date="1999" name="Parasitol. Res.">
        <title>Cloning and characterization of iron-containing superoxide dismutase from the human malaria species Plasmodium ovale, P. malariae and P. vivax.</title>
        <authorList>
            <person name="Baert C.B."/>
            <person name="Deloron P."/>
            <person name="Viscogliosi E."/>
            <person name="Delgado-Viscogliosi P."/>
            <person name="Camus D."/>
            <person name="Dive D."/>
        </authorList>
    </citation>
    <scope>NUCLEOTIDE SEQUENCE [GENOMIC DNA]</scope>
</reference>
<sequence length="198" mass="22602">MVITLPKLKYALNALSPHISEETLNFHYNKHHAGYVNKLNTLIKDTPFAEKSLLDIVKESSGAIFNNAAQIWNHTFYWDSMGPDCGGEPHGGIKEKIQEDFGSFNNFKEQFSNILCGHFGSGWGWLALNNNNKLVILQTHDAGNPIKDNTGIPILTCDIWEHAYCIDYRNDRASYVKAWWNLVNWNFANENLKKAMQK</sequence>
<dbReference type="EC" id="1.15.1.1"/>
<dbReference type="EMBL" id="AF139528">
    <property type="protein sequence ID" value="AAD43523.1"/>
    <property type="molecule type" value="Genomic_DNA"/>
</dbReference>
<dbReference type="SMR" id="Q9Y1B0"/>
<dbReference type="VEuPathDB" id="PlasmoDB:PmUG01_14041400"/>
<dbReference type="GO" id="GO:0005737">
    <property type="term" value="C:cytoplasm"/>
    <property type="evidence" value="ECO:0007669"/>
    <property type="project" value="UniProtKB-SubCell"/>
</dbReference>
<dbReference type="GO" id="GO:0046872">
    <property type="term" value="F:metal ion binding"/>
    <property type="evidence" value="ECO:0007669"/>
    <property type="project" value="UniProtKB-KW"/>
</dbReference>
<dbReference type="GO" id="GO:0004784">
    <property type="term" value="F:superoxide dismutase activity"/>
    <property type="evidence" value="ECO:0007669"/>
    <property type="project" value="UniProtKB-EC"/>
</dbReference>
<dbReference type="FunFam" id="1.10.287.990:FF:000002">
    <property type="entry name" value="Superoxide dismutase"/>
    <property type="match status" value="1"/>
</dbReference>
<dbReference type="FunFam" id="3.55.40.20:FF:000001">
    <property type="entry name" value="Superoxide dismutase"/>
    <property type="match status" value="1"/>
</dbReference>
<dbReference type="Gene3D" id="1.10.287.990">
    <property type="entry name" value="Fe,Mn superoxide dismutase (SOD) domain"/>
    <property type="match status" value="1"/>
</dbReference>
<dbReference type="Gene3D" id="3.55.40.20">
    <property type="entry name" value="Iron/manganese superoxide dismutase, C-terminal domain"/>
    <property type="match status" value="1"/>
</dbReference>
<dbReference type="InterPro" id="IPR001189">
    <property type="entry name" value="Mn/Fe_SOD"/>
</dbReference>
<dbReference type="InterPro" id="IPR019832">
    <property type="entry name" value="Mn/Fe_SOD_C"/>
</dbReference>
<dbReference type="InterPro" id="IPR019831">
    <property type="entry name" value="Mn/Fe_SOD_N"/>
</dbReference>
<dbReference type="InterPro" id="IPR036324">
    <property type="entry name" value="Mn/Fe_SOD_N_sf"/>
</dbReference>
<dbReference type="InterPro" id="IPR036314">
    <property type="entry name" value="SOD_C_sf"/>
</dbReference>
<dbReference type="PANTHER" id="PTHR42769">
    <property type="entry name" value="SUPEROXIDE DISMUTASE"/>
    <property type="match status" value="1"/>
</dbReference>
<dbReference type="PANTHER" id="PTHR42769:SF3">
    <property type="entry name" value="SUPEROXIDE DISMUTASE [FE] 2, CHLOROPLASTIC"/>
    <property type="match status" value="1"/>
</dbReference>
<dbReference type="Pfam" id="PF02777">
    <property type="entry name" value="Sod_Fe_C"/>
    <property type="match status" value="1"/>
</dbReference>
<dbReference type="Pfam" id="PF00081">
    <property type="entry name" value="Sod_Fe_N"/>
    <property type="match status" value="1"/>
</dbReference>
<dbReference type="PIRSF" id="PIRSF000349">
    <property type="entry name" value="SODismutase"/>
    <property type="match status" value="1"/>
</dbReference>
<dbReference type="PRINTS" id="PR01703">
    <property type="entry name" value="MNSODISMTASE"/>
</dbReference>
<dbReference type="SUPFAM" id="SSF54719">
    <property type="entry name" value="Fe,Mn superoxide dismutase (SOD), C-terminal domain"/>
    <property type="match status" value="1"/>
</dbReference>
<dbReference type="SUPFAM" id="SSF46609">
    <property type="entry name" value="Fe,Mn superoxide dismutase (SOD), N-terminal domain"/>
    <property type="match status" value="1"/>
</dbReference>
<evidence type="ECO:0000250" key="1"/>
<evidence type="ECO:0000305" key="2"/>
<feature type="chain" id="PRO_0000290113" description="Superoxide dismutase [Fe]">
    <location>
        <begin position="1"/>
        <end position="198"/>
    </location>
</feature>
<feature type="binding site" evidence="1">
    <location>
        <position position="27"/>
    </location>
    <ligand>
        <name>Fe cation</name>
        <dbReference type="ChEBI" id="CHEBI:24875"/>
    </ligand>
</feature>
<feature type="binding site" evidence="1">
    <location>
        <position position="74"/>
    </location>
    <ligand>
        <name>Fe cation</name>
        <dbReference type="ChEBI" id="CHEBI:24875"/>
    </ligand>
</feature>
<feature type="binding site" evidence="1">
    <location>
        <position position="158"/>
    </location>
    <ligand>
        <name>Fe cation</name>
        <dbReference type="ChEBI" id="CHEBI:24875"/>
    </ligand>
</feature>
<feature type="binding site" evidence="1">
    <location>
        <position position="162"/>
    </location>
    <ligand>
        <name>Fe cation</name>
        <dbReference type="ChEBI" id="CHEBI:24875"/>
    </ligand>
</feature>
<accession>Q9Y1B0</accession>
<protein>
    <recommendedName>
        <fullName>Superoxide dismutase [Fe]</fullName>
        <ecNumber>1.15.1.1</ecNumber>
    </recommendedName>
    <alternativeName>
        <fullName>FeSOD</fullName>
    </alternativeName>
</protein>
<keyword id="KW-0963">Cytoplasm</keyword>
<keyword id="KW-0408">Iron</keyword>
<keyword id="KW-0479">Metal-binding</keyword>
<keyword id="KW-0560">Oxidoreductase</keyword>
<name>SODF_PLAMA</name>
<gene>
    <name type="primary">SODB</name>
</gene>